<reference key="1">
    <citation type="journal article" date="2002" name="Plant Physiol.">
        <title>Molecular analysis of a bifunctional fatty acid conjugase/desaturase from tung. Implications for the evolution of plant fatty acid diversity.</title>
        <authorList>
            <person name="Dyer J.M."/>
            <person name="Chapital D.C."/>
            <person name="Kuan J.C."/>
            <person name="Mullen R.T."/>
            <person name="Turner C."/>
            <person name="McKeon T.A."/>
            <person name="Pepperman A.B."/>
        </authorList>
    </citation>
    <scope>NUCLEOTIDE SEQUENCE [MRNA]</scope>
    <scope>SUBCELLULAR LOCATION</scope>
    <scope>TISSUE SPECIFICITY</scope>
    <scope>FUNCTION</scope>
    <scope>CATALYTIC ACTIVITY</scope>
</reference>
<proteinExistence type="evidence at protein level"/>
<organism evidence="6">
    <name type="scientific">Vernicia fordii</name>
    <name type="common">Tung</name>
    <name type="synonym">Aleurites fordii</name>
    <dbReference type="NCBI Taxonomy" id="73154"/>
    <lineage>
        <taxon>Eukaryota</taxon>
        <taxon>Viridiplantae</taxon>
        <taxon>Streptophyta</taxon>
        <taxon>Embryophyta</taxon>
        <taxon>Tracheophyta</taxon>
        <taxon>Spermatophyta</taxon>
        <taxon>Magnoliopsida</taxon>
        <taxon>eudicotyledons</taxon>
        <taxon>Gunneridae</taxon>
        <taxon>Pentapetalae</taxon>
        <taxon>rosids</taxon>
        <taxon>fabids</taxon>
        <taxon>Malpighiales</taxon>
        <taxon>Euphorbiaceae</taxon>
        <taxon>Crotonoideae</taxon>
        <taxon>Aleuritideae</taxon>
        <taxon>Vernicia</taxon>
    </lineage>
</organism>
<sequence length="386" mass="44375">MGAGGRMSVAPNNSKCEKKESRSVKRVPHTKPPFTLGQLKQAIPSHCFKRSLLRSFSYVVYDLSLSFIFYSIATTYFHLLPSPITYIAWPVYWAFQGCILTSVWVLGHECGHHAFSEYNWLDDTIGLILHSSLLVPYFSFKISHRRHHSNIASLERDEVFVPRLKSAIPWYSKYLNNPPGRALTLVATLFIGWPLYLAFNVSGRYYDRFACHYDPYSPIYSDRERLQIYISDAMIFVAAYVLYKIAMAKGLAWLVCIYGVPLLIVNALVVTITSLQHTHVALPHYDSSEWDWLRGGLATVDRDYGVFNKIFHNATDTHVIHHLFSSMPHYHGVEATRAIKPILGDYYLFDDTPIHVALWREAKECLFVEPDEGDNNNGVFWYSNKF</sequence>
<evidence type="ECO:0000255" key="1"/>
<evidence type="ECO:0000256" key="2">
    <source>
        <dbReference type="SAM" id="MobiDB-lite"/>
    </source>
</evidence>
<evidence type="ECO:0000269" key="3">
    <source>
    </source>
</evidence>
<evidence type="ECO:0000303" key="4">
    <source>
    </source>
</evidence>
<evidence type="ECO:0000305" key="5"/>
<evidence type="ECO:0000312" key="6">
    <source>
        <dbReference type="EMBL" id="AAN87574.1"/>
    </source>
</evidence>
<accession>Q8GZC2</accession>
<protein>
    <recommendedName>
        <fullName evidence="4">Bifunctional desaturase/conjugase FADX</fullName>
    </recommendedName>
    <alternativeName>
        <fullName evidence="5">Acyl-lipid (9+3)-(E)-desaturase</fullName>
        <ecNumber evidence="3">1.14.19.34</ecNumber>
    </alternativeName>
    <alternativeName>
        <fullName evidence="5">Delta(12) acyl-lipid conjugase (11E,13E-forming)</fullName>
        <ecNumber evidence="3">1.14.19.33</ecNumber>
    </alternativeName>
</protein>
<comment type="function">
    <text evidence="3">Converts linoleic acid to alpha-eleostearic acid (18:3(9Z,11E,13E)) and alpha-linolenic acid to alpha-parinaric acid (18:4(9Z,11E,13E,15Z)). Converts a single cis double bond at carbon 12 to two conjugated trans bonds at positions 11 and 13. Can also act as a 12(E) desaturase when acting on the monounsaturated fatty acids oleate and palmitoleate, stereoselectively introducing a trans double bond.</text>
</comment>
<comment type="catalytic activity">
    <reaction evidence="3">
        <text>a (9Z,12Z)-octadecadienoyl-containing glycerolipid + 2 Fe(II)-[cytochrome b5] + O2 + 2 H(+) = a (9Z,11E,13E)-octadecatrienoyl-containing glycerolipid + 2 Fe(III)-[cytochrome b5] + 2 H2O</text>
        <dbReference type="Rhea" id="RHEA:46368"/>
        <dbReference type="Rhea" id="RHEA-COMP:10438"/>
        <dbReference type="Rhea" id="RHEA-COMP:10439"/>
        <dbReference type="ChEBI" id="CHEBI:15377"/>
        <dbReference type="ChEBI" id="CHEBI:15378"/>
        <dbReference type="ChEBI" id="CHEBI:15379"/>
        <dbReference type="ChEBI" id="CHEBI:29033"/>
        <dbReference type="ChEBI" id="CHEBI:29034"/>
        <dbReference type="ChEBI" id="CHEBI:88254"/>
        <dbReference type="ChEBI" id="CHEBI:88351"/>
        <dbReference type="EC" id="1.14.19.33"/>
    </reaction>
</comment>
<comment type="catalytic activity">
    <reaction evidence="3">
        <text>(9Z,12Z,15Z)-octadecatrienoyl-containing glycerolipid + 2 Fe(II)-[cytochrome b5] + O2 + 2 H(+) = a (9Z,11E,13E,15Z)-octadecatetraenoyl-containing glycerolipid + 2 Fe(III)-[cytochrome b5] + 2 H2O</text>
        <dbReference type="Rhea" id="RHEA:46372"/>
        <dbReference type="Rhea" id="RHEA-COMP:10438"/>
        <dbReference type="Rhea" id="RHEA-COMP:10439"/>
        <dbReference type="ChEBI" id="CHEBI:15377"/>
        <dbReference type="ChEBI" id="CHEBI:15378"/>
        <dbReference type="ChEBI" id="CHEBI:15379"/>
        <dbReference type="ChEBI" id="CHEBI:29033"/>
        <dbReference type="ChEBI" id="CHEBI:29034"/>
        <dbReference type="ChEBI" id="CHEBI:88251"/>
        <dbReference type="ChEBI" id="CHEBI:90078"/>
        <dbReference type="EC" id="1.14.19.33"/>
    </reaction>
</comment>
<comment type="catalytic activity">
    <reaction evidence="3">
        <text>a (9Z)-octadecenoyl-containing glycerolipid + 2 Fe(II)-[cytochrome b5] + O2 + 2 H(+) = a (9Z,12E)-octadecadienoyl-containing glycerolipid + 2 Fe(III)-[cytochrome b5] + 2 H2O</text>
        <dbReference type="Rhea" id="RHEA:38047"/>
        <dbReference type="Rhea" id="RHEA-COMP:10438"/>
        <dbReference type="Rhea" id="RHEA-COMP:10439"/>
        <dbReference type="ChEBI" id="CHEBI:15377"/>
        <dbReference type="ChEBI" id="CHEBI:15378"/>
        <dbReference type="ChEBI" id="CHEBI:15379"/>
        <dbReference type="ChEBI" id="CHEBI:29033"/>
        <dbReference type="ChEBI" id="CHEBI:29034"/>
        <dbReference type="ChEBI" id="CHEBI:88240"/>
        <dbReference type="ChEBI" id="CHEBI:88241"/>
        <dbReference type="EC" id="1.14.19.34"/>
    </reaction>
</comment>
<comment type="catalytic activity">
    <reaction evidence="3">
        <text>a (9Z)-hexadecenoyl-containing glycerolipid + 2 Fe(II)-[cytochrome b5] + O2 + 2 H(+) = a (9Z,12E)-hexadecadienoyl-containing glycerolipid + 2 Fe(III)-[cytochrome b5] + 2 H2O</text>
        <dbReference type="Rhea" id="RHEA:46240"/>
        <dbReference type="Rhea" id="RHEA-COMP:10438"/>
        <dbReference type="Rhea" id="RHEA-COMP:10439"/>
        <dbReference type="ChEBI" id="CHEBI:15377"/>
        <dbReference type="ChEBI" id="CHEBI:15378"/>
        <dbReference type="ChEBI" id="CHEBI:15379"/>
        <dbReference type="ChEBI" id="CHEBI:29033"/>
        <dbReference type="ChEBI" id="CHEBI:29034"/>
        <dbReference type="ChEBI" id="CHEBI:88261"/>
        <dbReference type="ChEBI" id="CHEBI:88262"/>
        <dbReference type="EC" id="1.14.19.34"/>
    </reaction>
</comment>
<comment type="pathway">
    <text>Lipid metabolism; polyunsaturated fatty acid biosynthesis.</text>
</comment>
<comment type="subcellular location">
    <subcellularLocation>
        <location evidence="3">Endoplasmic reticulum membrane</location>
        <topology evidence="1">Multi-pass membrane protein</topology>
    </subcellularLocation>
</comment>
<comment type="tissue specificity">
    <text evidence="3">Expressed exclusively in developing seeds.</text>
</comment>
<comment type="domain">
    <text evidence="5">The histidine box domains may contain the active site and/or be involved in metal ion binding.</text>
</comment>
<comment type="similarity">
    <text evidence="5">Belongs to the fatty acid desaturase type 1 family.</text>
</comment>
<keyword id="KW-0256">Endoplasmic reticulum</keyword>
<keyword id="KW-0275">Fatty acid biosynthesis</keyword>
<keyword id="KW-0276">Fatty acid metabolism</keyword>
<keyword id="KW-0444">Lipid biosynthesis</keyword>
<keyword id="KW-0443">Lipid metabolism</keyword>
<keyword id="KW-0472">Membrane</keyword>
<keyword id="KW-0560">Oxidoreductase</keyword>
<keyword id="KW-0812">Transmembrane</keyword>
<keyword id="KW-1133">Transmembrane helix</keyword>
<feature type="chain" id="PRO_0000434405" description="Bifunctional desaturase/conjugase FADX">
    <location>
        <begin position="1"/>
        <end position="386"/>
    </location>
</feature>
<feature type="transmembrane region" description="Helical" evidence="1">
    <location>
        <begin position="65"/>
        <end position="85"/>
    </location>
</feature>
<feature type="transmembrane region" description="Helical" evidence="1">
    <location>
        <begin position="87"/>
        <end position="107"/>
    </location>
</feature>
<feature type="transmembrane region" description="Helical" evidence="1">
    <location>
        <begin position="182"/>
        <end position="202"/>
    </location>
</feature>
<feature type="transmembrane region" description="Helical" evidence="1">
    <location>
        <begin position="228"/>
        <end position="248"/>
    </location>
</feature>
<feature type="transmembrane region" description="Helical" evidence="1">
    <location>
        <begin position="250"/>
        <end position="270"/>
    </location>
</feature>
<feature type="region of interest" description="Disordered" evidence="2">
    <location>
        <begin position="1"/>
        <end position="28"/>
    </location>
</feature>
<feature type="short sequence motif" description="Histidine box-1" evidence="5">
    <location>
        <begin position="108"/>
        <end position="112"/>
    </location>
</feature>
<feature type="short sequence motif" description="Histidine box-2" evidence="5">
    <location>
        <begin position="144"/>
        <end position="148"/>
    </location>
</feature>
<feature type="short sequence motif" description="Histidine box-3" evidence="5">
    <location>
        <begin position="318"/>
        <end position="322"/>
    </location>
</feature>
<dbReference type="EC" id="1.14.19.34" evidence="3"/>
<dbReference type="EC" id="1.14.19.33" evidence="3"/>
<dbReference type="EMBL" id="AF525535">
    <property type="protein sequence ID" value="AAN87574.1"/>
    <property type="molecule type" value="mRNA"/>
</dbReference>
<dbReference type="KEGG" id="ag:AAN87574"/>
<dbReference type="BRENDA" id="1.14.19.14">
    <property type="organism ID" value="9082"/>
</dbReference>
<dbReference type="BRENDA" id="1.14.19.33">
    <property type="organism ID" value="9082"/>
</dbReference>
<dbReference type="UniPathway" id="UPA00658"/>
<dbReference type="GO" id="GO:0005789">
    <property type="term" value="C:endoplasmic reticulum membrane"/>
    <property type="evidence" value="ECO:0007669"/>
    <property type="project" value="UniProtKB-SubCell"/>
</dbReference>
<dbReference type="GO" id="GO:0016717">
    <property type="term" value="F:oxidoreductase activity, acting on paired donors, with oxidation of a pair of donors resulting in the reduction of molecular oxygen to two molecules of water"/>
    <property type="evidence" value="ECO:0007669"/>
    <property type="project" value="InterPro"/>
</dbReference>
<dbReference type="GO" id="GO:0006636">
    <property type="term" value="P:unsaturated fatty acid biosynthetic process"/>
    <property type="evidence" value="ECO:0007669"/>
    <property type="project" value="UniProtKB-UniPathway"/>
</dbReference>
<dbReference type="CDD" id="cd03507">
    <property type="entry name" value="Delta12-FADS-like"/>
    <property type="match status" value="1"/>
</dbReference>
<dbReference type="InterPro" id="IPR005804">
    <property type="entry name" value="FA_desaturase_dom"/>
</dbReference>
<dbReference type="InterPro" id="IPR021863">
    <property type="entry name" value="FAS_N"/>
</dbReference>
<dbReference type="InterPro" id="IPR012171">
    <property type="entry name" value="Fatty_acid_desaturase"/>
</dbReference>
<dbReference type="PANTHER" id="PTHR32100">
    <property type="entry name" value="OMEGA-6 FATTY ACID DESATURASE, CHLOROPLASTIC"/>
    <property type="match status" value="1"/>
</dbReference>
<dbReference type="Pfam" id="PF11960">
    <property type="entry name" value="DUF3474"/>
    <property type="match status" value="1"/>
</dbReference>
<dbReference type="Pfam" id="PF00487">
    <property type="entry name" value="FA_desaturase"/>
    <property type="match status" value="1"/>
</dbReference>
<name>FADX_VERFO</name>